<name>DEF_STAAW</name>
<proteinExistence type="inferred from homology"/>
<feature type="chain" id="PRO_0000082844" description="Peptide deformylase">
    <location>
        <begin position="1"/>
        <end position="183"/>
    </location>
</feature>
<feature type="active site" evidence="1">
    <location>
        <position position="155"/>
    </location>
</feature>
<feature type="binding site" evidence="1">
    <location>
        <position position="111"/>
    </location>
    <ligand>
        <name>Fe cation</name>
        <dbReference type="ChEBI" id="CHEBI:24875"/>
    </ligand>
</feature>
<feature type="binding site" evidence="1">
    <location>
        <position position="154"/>
    </location>
    <ligand>
        <name>Fe cation</name>
        <dbReference type="ChEBI" id="CHEBI:24875"/>
    </ligand>
</feature>
<feature type="binding site" evidence="1">
    <location>
        <position position="158"/>
    </location>
    <ligand>
        <name>Fe cation</name>
        <dbReference type="ChEBI" id="CHEBI:24875"/>
    </ligand>
</feature>
<protein>
    <recommendedName>
        <fullName evidence="1">Peptide deformylase</fullName>
        <shortName evidence="1">PDF</shortName>
        <ecNumber evidence="1">3.5.1.88</ecNumber>
    </recommendedName>
    <alternativeName>
        <fullName evidence="1">Polypeptide deformylase</fullName>
    </alternativeName>
</protein>
<comment type="function">
    <text evidence="1">Removes the formyl group from the N-terminal Met of newly synthesized proteins. Requires at least a dipeptide for an efficient rate of reaction. N-terminal L-methionine is a prerequisite for activity but the enzyme has broad specificity at other positions.</text>
</comment>
<comment type="catalytic activity">
    <reaction evidence="1">
        <text>N-terminal N-formyl-L-methionyl-[peptide] + H2O = N-terminal L-methionyl-[peptide] + formate</text>
        <dbReference type="Rhea" id="RHEA:24420"/>
        <dbReference type="Rhea" id="RHEA-COMP:10639"/>
        <dbReference type="Rhea" id="RHEA-COMP:10640"/>
        <dbReference type="ChEBI" id="CHEBI:15377"/>
        <dbReference type="ChEBI" id="CHEBI:15740"/>
        <dbReference type="ChEBI" id="CHEBI:49298"/>
        <dbReference type="ChEBI" id="CHEBI:64731"/>
        <dbReference type="EC" id="3.5.1.88"/>
    </reaction>
</comment>
<comment type="cofactor">
    <cofactor evidence="1">
        <name>Fe(2+)</name>
        <dbReference type="ChEBI" id="CHEBI:29033"/>
    </cofactor>
    <text evidence="1">Binds 1 Fe(2+) ion.</text>
</comment>
<comment type="similarity">
    <text evidence="1">Belongs to the polypeptide deformylase family.</text>
</comment>
<reference key="1">
    <citation type="journal article" date="2002" name="Lancet">
        <title>Genome and virulence determinants of high virulence community-acquired MRSA.</title>
        <authorList>
            <person name="Baba T."/>
            <person name="Takeuchi F."/>
            <person name="Kuroda M."/>
            <person name="Yuzawa H."/>
            <person name="Aoki K."/>
            <person name="Oguchi A."/>
            <person name="Nagai Y."/>
            <person name="Iwama N."/>
            <person name="Asano K."/>
            <person name="Naimi T."/>
            <person name="Kuroda H."/>
            <person name="Cui L."/>
            <person name="Yamamoto K."/>
            <person name="Hiramatsu K."/>
        </authorList>
    </citation>
    <scope>NUCLEOTIDE SEQUENCE [LARGE SCALE GENOMIC DNA]</scope>
    <source>
        <strain>MW2</strain>
    </source>
</reference>
<evidence type="ECO:0000255" key="1">
    <source>
        <dbReference type="HAMAP-Rule" id="MF_00163"/>
    </source>
</evidence>
<keyword id="KW-0378">Hydrolase</keyword>
<keyword id="KW-0408">Iron</keyword>
<keyword id="KW-0479">Metal-binding</keyword>
<keyword id="KW-0648">Protein biosynthesis</keyword>
<accession>Q8NX78</accession>
<sequence length="183" mass="20560">MLTMKDIIRDGHPTLRQKAAELELPLTKEEKETLIAMREFLVNSQDEEIAKRYGLRSGVGLAAPQINISKRMIAVLIPDDGSGKSYDYMLVNPKIVSHSVQEAYLPTGEGCLSVDDNVAGLVHRHNRITIKAKDIEGNDIQLRLKGYPAIVFQHEIDHLNGVMFYDHIDKDHPLQPHTDAVEV</sequence>
<dbReference type="EC" id="3.5.1.88" evidence="1"/>
<dbReference type="EMBL" id="BA000033">
    <property type="protein sequence ID" value="BAB94839.1"/>
    <property type="molecule type" value="Genomic_DNA"/>
</dbReference>
<dbReference type="RefSeq" id="WP_000957036.1">
    <property type="nucleotide sequence ID" value="NC_003923.1"/>
</dbReference>
<dbReference type="SMR" id="Q8NX78"/>
<dbReference type="DrugBank" id="DB04310">
    <property type="generic name" value="2-[(Formyl-Hydroxy-Amino)-Methyl]-Heptanoic Acid [1-(2-Hydroxymethyl-Pyrrolidine-1-Carbonyl)-2-Methyl-Propyl]-Amide"/>
</dbReference>
<dbReference type="DrugBank" id="DB02153">
    <property type="generic name" value="3-sulfino-L-alanine"/>
</dbReference>
<dbReference type="KEGG" id="sam:MW0974"/>
<dbReference type="HOGENOM" id="CLU_061901_4_0_9"/>
<dbReference type="GO" id="GO:0046872">
    <property type="term" value="F:metal ion binding"/>
    <property type="evidence" value="ECO:0007669"/>
    <property type="project" value="UniProtKB-KW"/>
</dbReference>
<dbReference type="GO" id="GO:0042586">
    <property type="term" value="F:peptide deformylase activity"/>
    <property type="evidence" value="ECO:0007669"/>
    <property type="project" value="UniProtKB-UniRule"/>
</dbReference>
<dbReference type="GO" id="GO:0043686">
    <property type="term" value="P:co-translational protein modification"/>
    <property type="evidence" value="ECO:0007669"/>
    <property type="project" value="TreeGrafter"/>
</dbReference>
<dbReference type="GO" id="GO:0006412">
    <property type="term" value="P:translation"/>
    <property type="evidence" value="ECO:0007669"/>
    <property type="project" value="UniProtKB-UniRule"/>
</dbReference>
<dbReference type="CDD" id="cd00487">
    <property type="entry name" value="Pep_deformylase"/>
    <property type="match status" value="1"/>
</dbReference>
<dbReference type="FunFam" id="3.90.45.10:FF:000002">
    <property type="entry name" value="Peptide deformylase"/>
    <property type="match status" value="1"/>
</dbReference>
<dbReference type="Gene3D" id="3.90.45.10">
    <property type="entry name" value="Peptide deformylase"/>
    <property type="match status" value="1"/>
</dbReference>
<dbReference type="HAMAP" id="MF_00163">
    <property type="entry name" value="Pep_deformylase"/>
    <property type="match status" value="1"/>
</dbReference>
<dbReference type="InterPro" id="IPR023635">
    <property type="entry name" value="Peptide_deformylase"/>
</dbReference>
<dbReference type="InterPro" id="IPR036821">
    <property type="entry name" value="Peptide_deformylase_sf"/>
</dbReference>
<dbReference type="NCBIfam" id="TIGR00079">
    <property type="entry name" value="pept_deformyl"/>
    <property type="match status" value="1"/>
</dbReference>
<dbReference type="PANTHER" id="PTHR10458">
    <property type="entry name" value="PEPTIDE DEFORMYLASE"/>
    <property type="match status" value="1"/>
</dbReference>
<dbReference type="PANTHER" id="PTHR10458:SF8">
    <property type="entry name" value="PEPTIDE DEFORMYLASE 2"/>
    <property type="match status" value="1"/>
</dbReference>
<dbReference type="Pfam" id="PF01327">
    <property type="entry name" value="Pep_deformylase"/>
    <property type="match status" value="1"/>
</dbReference>
<dbReference type="PIRSF" id="PIRSF004749">
    <property type="entry name" value="Pep_def"/>
    <property type="match status" value="1"/>
</dbReference>
<dbReference type="PRINTS" id="PR01576">
    <property type="entry name" value="PDEFORMYLASE"/>
</dbReference>
<dbReference type="SUPFAM" id="SSF56420">
    <property type="entry name" value="Peptide deformylase"/>
    <property type="match status" value="1"/>
</dbReference>
<gene>
    <name evidence="1" type="primary">def</name>
    <name type="synonym">def1</name>
    <name type="synonym">pdf1</name>
    <name type="ordered locus">MW0974</name>
</gene>
<organism>
    <name type="scientific">Staphylococcus aureus (strain MW2)</name>
    <dbReference type="NCBI Taxonomy" id="196620"/>
    <lineage>
        <taxon>Bacteria</taxon>
        <taxon>Bacillati</taxon>
        <taxon>Bacillota</taxon>
        <taxon>Bacilli</taxon>
        <taxon>Bacillales</taxon>
        <taxon>Staphylococcaceae</taxon>
        <taxon>Staphylococcus</taxon>
    </lineage>
</organism>